<gene>
    <name evidence="1" type="primary">rps16</name>
</gene>
<dbReference type="EMBL" id="AB240139">
    <property type="protein sequence ID" value="BAE47978.1"/>
    <property type="molecule type" value="Genomic_DNA"/>
</dbReference>
<dbReference type="RefSeq" id="YP_398840.1">
    <property type="nucleotide sequence ID" value="NC_007602.1"/>
</dbReference>
<dbReference type="SMR" id="Q33C57"/>
<dbReference type="GeneID" id="3776385"/>
<dbReference type="KEGG" id="nto:3776385"/>
<dbReference type="OrthoDB" id="407221at2759"/>
<dbReference type="GO" id="GO:0009507">
    <property type="term" value="C:chloroplast"/>
    <property type="evidence" value="ECO:0007669"/>
    <property type="project" value="UniProtKB-SubCell"/>
</dbReference>
<dbReference type="GO" id="GO:0005739">
    <property type="term" value="C:mitochondrion"/>
    <property type="evidence" value="ECO:0007669"/>
    <property type="project" value="GOC"/>
</dbReference>
<dbReference type="GO" id="GO:0015935">
    <property type="term" value="C:small ribosomal subunit"/>
    <property type="evidence" value="ECO:0007669"/>
    <property type="project" value="TreeGrafter"/>
</dbReference>
<dbReference type="GO" id="GO:0003735">
    <property type="term" value="F:structural constituent of ribosome"/>
    <property type="evidence" value="ECO:0007669"/>
    <property type="project" value="InterPro"/>
</dbReference>
<dbReference type="GO" id="GO:0032543">
    <property type="term" value="P:mitochondrial translation"/>
    <property type="evidence" value="ECO:0007669"/>
    <property type="project" value="TreeGrafter"/>
</dbReference>
<dbReference type="FunFam" id="3.30.1320.10:FF:000003">
    <property type="entry name" value="30S ribosomal protein S16, chloroplastic"/>
    <property type="match status" value="1"/>
</dbReference>
<dbReference type="Gene3D" id="3.30.1320.10">
    <property type="match status" value="1"/>
</dbReference>
<dbReference type="HAMAP" id="MF_00385">
    <property type="entry name" value="Ribosomal_bS16"/>
    <property type="match status" value="1"/>
</dbReference>
<dbReference type="InterPro" id="IPR000307">
    <property type="entry name" value="Ribosomal_bS16"/>
</dbReference>
<dbReference type="InterPro" id="IPR020592">
    <property type="entry name" value="Ribosomal_bS16_CS"/>
</dbReference>
<dbReference type="InterPro" id="IPR023803">
    <property type="entry name" value="Ribosomal_bS16_dom_sf"/>
</dbReference>
<dbReference type="NCBIfam" id="TIGR00002">
    <property type="entry name" value="S16"/>
    <property type="match status" value="1"/>
</dbReference>
<dbReference type="PANTHER" id="PTHR12919">
    <property type="entry name" value="30S RIBOSOMAL PROTEIN S16"/>
    <property type="match status" value="1"/>
</dbReference>
<dbReference type="PANTHER" id="PTHR12919:SF20">
    <property type="entry name" value="SMALL RIBOSOMAL SUBUNIT PROTEIN BS16M"/>
    <property type="match status" value="1"/>
</dbReference>
<dbReference type="Pfam" id="PF00886">
    <property type="entry name" value="Ribosomal_S16"/>
    <property type="match status" value="1"/>
</dbReference>
<dbReference type="SUPFAM" id="SSF54565">
    <property type="entry name" value="Ribosomal protein S16"/>
    <property type="match status" value="1"/>
</dbReference>
<dbReference type="PROSITE" id="PS00732">
    <property type="entry name" value="RIBOSOMAL_S16"/>
    <property type="match status" value="1"/>
</dbReference>
<accession>Q33C57</accession>
<name>RR16_NICTO</name>
<feature type="chain" id="PRO_0000276955" description="Small ribosomal subunit protein bS16c">
    <location>
        <begin position="1"/>
        <end position="85"/>
    </location>
</feature>
<protein>
    <recommendedName>
        <fullName evidence="1">Small ribosomal subunit protein bS16c</fullName>
    </recommendedName>
    <alternativeName>
        <fullName evidence="2">30S ribosomal protein S16, chloroplastic</fullName>
    </alternativeName>
</protein>
<evidence type="ECO:0000255" key="1">
    <source>
        <dbReference type="HAMAP-Rule" id="MF_00385"/>
    </source>
</evidence>
<evidence type="ECO:0000305" key="2"/>
<reference key="1">
    <citation type="journal article" date="2006" name="Mol. Genet. Genomics">
        <title>The chloroplast genome of Nicotiana sylvestris and Nicotiana tomentosiformis: complete sequencing confirms that the Nicotiana sylvestris progenitor is the maternal genome donor of Nicotiana tabacum.</title>
        <authorList>
            <person name="Yukawa M."/>
            <person name="Tsudzuki T."/>
            <person name="Sugiura M."/>
        </authorList>
    </citation>
    <scope>NUCLEOTIDE SEQUENCE [LARGE SCALE GENOMIC DNA]</scope>
</reference>
<sequence length="85" mass="9921">MVKLRLKRCGRKQRAVYRIVAIDVRSRREGKDLRKVGFYDPIKNQTYLNVPAILYFLEKGAQPTGTVQDILKKAEVFKELRPNQS</sequence>
<comment type="subcellular location">
    <subcellularLocation>
        <location>Plastid</location>
        <location>Chloroplast</location>
    </subcellularLocation>
</comment>
<comment type="similarity">
    <text evidence="1">Belongs to the bacterial ribosomal protein bS16 family.</text>
</comment>
<keyword id="KW-0150">Chloroplast</keyword>
<keyword id="KW-0934">Plastid</keyword>
<keyword id="KW-0687">Ribonucleoprotein</keyword>
<keyword id="KW-0689">Ribosomal protein</keyword>
<geneLocation type="chloroplast"/>
<organism>
    <name type="scientific">Nicotiana tomentosiformis</name>
    <name type="common">Tobacco</name>
    <dbReference type="NCBI Taxonomy" id="4098"/>
    <lineage>
        <taxon>Eukaryota</taxon>
        <taxon>Viridiplantae</taxon>
        <taxon>Streptophyta</taxon>
        <taxon>Embryophyta</taxon>
        <taxon>Tracheophyta</taxon>
        <taxon>Spermatophyta</taxon>
        <taxon>Magnoliopsida</taxon>
        <taxon>eudicotyledons</taxon>
        <taxon>Gunneridae</taxon>
        <taxon>Pentapetalae</taxon>
        <taxon>asterids</taxon>
        <taxon>lamiids</taxon>
        <taxon>Solanales</taxon>
        <taxon>Solanaceae</taxon>
        <taxon>Nicotianoideae</taxon>
        <taxon>Nicotianeae</taxon>
        <taxon>Nicotiana</taxon>
    </lineage>
</organism>
<proteinExistence type="inferred from homology"/>